<proteinExistence type="inferred from homology"/>
<name>RS18_RICAH</name>
<dbReference type="EMBL" id="CP000847">
    <property type="protein sequence ID" value="ABV74402.1"/>
    <property type="molecule type" value="Genomic_DNA"/>
</dbReference>
<dbReference type="RefSeq" id="WP_012013272.1">
    <property type="nucleotide sequence ID" value="NC_009881.1"/>
</dbReference>
<dbReference type="SMR" id="A8GLX7"/>
<dbReference type="STRING" id="293614.A1C_00345"/>
<dbReference type="KEGG" id="rak:A1C_00345"/>
<dbReference type="eggNOG" id="COG0238">
    <property type="taxonomic scope" value="Bacteria"/>
</dbReference>
<dbReference type="HOGENOM" id="CLU_148710_2_1_5"/>
<dbReference type="Proteomes" id="UP000006830">
    <property type="component" value="Chromosome"/>
</dbReference>
<dbReference type="GO" id="GO:0022627">
    <property type="term" value="C:cytosolic small ribosomal subunit"/>
    <property type="evidence" value="ECO:0007669"/>
    <property type="project" value="TreeGrafter"/>
</dbReference>
<dbReference type="GO" id="GO:0070181">
    <property type="term" value="F:small ribosomal subunit rRNA binding"/>
    <property type="evidence" value="ECO:0007669"/>
    <property type="project" value="TreeGrafter"/>
</dbReference>
<dbReference type="GO" id="GO:0003735">
    <property type="term" value="F:structural constituent of ribosome"/>
    <property type="evidence" value="ECO:0007669"/>
    <property type="project" value="InterPro"/>
</dbReference>
<dbReference type="GO" id="GO:0006412">
    <property type="term" value="P:translation"/>
    <property type="evidence" value="ECO:0007669"/>
    <property type="project" value="UniProtKB-UniRule"/>
</dbReference>
<dbReference type="Gene3D" id="4.10.640.10">
    <property type="entry name" value="Ribosomal protein S18"/>
    <property type="match status" value="1"/>
</dbReference>
<dbReference type="HAMAP" id="MF_00270">
    <property type="entry name" value="Ribosomal_bS18"/>
    <property type="match status" value="1"/>
</dbReference>
<dbReference type="InterPro" id="IPR001648">
    <property type="entry name" value="Ribosomal_bS18"/>
</dbReference>
<dbReference type="InterPro" id="IPR018275">
    <property type="entry name" value="Ribosomal_bS18_CS"/>
</dbReference>
<dbReference type="InterPro" id="IPR036870">
    <property type="entry name" value="Ribosomal_bS18_sf"/>
</dbReference>
<dbReference type="NCBIfam" id="TIGR00165">
    <property type="entry name" value="S18"/>
    <property type="match status" value="1"/>
</dbReference>
<dbReference type="PANTHER" id="PTHR13479">
    <property type="entry name" value="30S RIBOSOMAL PROTEIN S18"/>
    <property type="match status" value="1"/>
</dbReference>
<dbReference type="PANTHER" id="PTHR13479:SF40">
    <property type="entry name" value="SMALL RIBOSOMAL SUBUNIT PROTEIN BS18M"/>
    <property type="match status" value="1"/>
</dbReference>
<dbReference type="Pfam" id="PF01084">
    <property type="entry name" value="Ribosomal_S18"/>
    <property type="match status" value="1"/>
</dbReference>
<dbReference type="PRINTS" id="PR00974">
    <property type="entry name" value="RIBOSOMALS18"/>
</dbReference>
<dbReference type="SUPFAM" id="SSF46911">
    <property type="entry name" value="Ribosomal protein S18"/>
    <property type="match status" value="1"/>
</dbReference>
<dbReference type="PROSITE" id="PS00057">
    <property type="entry name" value="RIBOSOMAL_S18"/>
    <property type="match status" value="1"/>
</dbReference>
<protein>
    <recommendedName>
        <fullName evidence="1">Small ribosomal subunit protein bS18</fullName>
    </recommendedName>
    <alternativeName>
        <fullName evidence="2">30S ribosomal protein S18</fullName>
    </alternativeName>
</protein>
<accession>A8GLX7</accession>
<keyword id="KW-0687">Ribonucleoprotein</keyword>
<keyword id="KW-0689">Ribosomal protein</keyword>
<keyword id="KW-0694">RNA-binding</keyword>
<keyword id="KW-0699">rRNA-binding</keyword>
<sequence length="95" mass="10705">MLKSNNASETVTHKVGDKTAKKVFFRRRKGCPLSVHNAPVIDYKNPELLIKFVSEGGRMLPSRITNVCAKKQRKLNNAIKIARILALLPFVFQAK</sequence>
<comment type="function">
    <text evidence="1">Binds as a heterodimer with protein bS6 to the central domain of the 16S rRNA, where it helps stabilize the platform of the 30S subunit.</text>
</comment>
<comment type="subunit">
    <text evidence="1">Part of the 30S ribosomal subunit. Forms a tight heterodimer with protein bS6.</text>
</comment>
<comment type="similarity">
    <text evidence="1">Belongs to the bacterial ribosomal protein bS18 family.</text>
</comment>
<feature type="chain" id="PRO_1000003591" description="Small ribosomal subunit protein bS18">
    <location>
        <begin position="1"/>
        <end position="95"/>
    </location>
</feature>
<reference key="1">
    <citation type="submission" date="2007-09" db="EMBL/GenBank/DDBJ databases">
        <title>Complete genome sequence of Rickettsia akari.</title>
        <authorList>
            <person name="Madan A."/>
            <person name="Fahey J."/>
            <person name="Helton E."/>
            <person name="Ketteman M."/>
            <person name="Madan A."/>
            <person name="Rodrigues S."/>
            <person name="Sanchez A."/>
            <person name="Whiting M."/>
            <person name="Dasch G."/>
            <person name="Eremeeva M."/>
        </authorList>
    </citation>
    <scope>NUCLEOTIDE SEQUENCE [LARGE SCALE GENOMIC DNA]</scope>
    <source>
        <strain>Hartford</strain>
    </source>
</reference>
<evidence type="ECO:0000255" key="1">
    <source>
        <dbReference type="HAMAP-Rule" id="MF_00270"/>
    </source>
</evidence>
<evidence type="ECO:0000305" key="2"/>
<organism>
    <name type="scientific">Rickettsia akari (strain Hartford)</name>
    <dbReference type="NCBI Taxonomy" id="293614"/>
    <lineage>
        <taxon>Bacteria</taxon>
        <taxon>Pseudomonadati</taxon>
        <taxon>Pseudomonadota</taxon>
        <taxon>Alphaproteobacteria</taxon>
        <taxon>Rickettsiales</taxon>
        <taxon>Rickettsiaceae</taxon>
        <taxon>Rickettsieae</taxon>
        <taxon>Rickettsia</taxon>
        <taxon>spotted fever group</taxon>
    </lineage>
</organism>
<gene>
    <name evidence="1" type="primary">rpsR</name>
    <name type="ordered locus">A1C_00345</name>
</gene>